<proteinExistence type="inferred from homology"/>
<comment type="function">
    <text evidence="1">Catalyzes the ATP-dependent conversion of 7-carboxy-7-deazaguanine (CDG) to 7-cyano-7-deazaguanine (preQ(0)).</text>
</comment>
<comment type="catalytic activity">
    <reaction evidence="1">
        <text>7-carboxy-7-deazaguanine + NH4(+) + ATP = 7-cyano-7-deazaguanine + ADP + phosphate + H2O + H(+)</text>
        <dbReference type="Rhea" id="RHEA:27982"/>
        <dbReference type="ChEBI" id="CHEBI:15377"/>
        <dbReference type="ChEBI" id="CHEBI:15378"/>
        <dbReference type="ChEBI" id="CHEBI:28938"/>
        <dbReference type="ChEBI" id="CHEBI:30616"/>
        <dbReference type="ChEBI" id="CHEBI:43474"/>
        <dbReference type="ChEBI" id="CHEBI:45075"/>
        <dbReference type="ChEBI" id="CHEBI:61036"/>
        <dbReference type="ChEBI" id="CHEBI:456216"/>
        <dbReference type="EC" id="6.3.4.20"/>
    </reaction>
</comment>
<comment type="cofactor">
    <cofactor evidence="1">
        <name>Zn(2+)</name>
        <dbReference type="ChEBI" id="CHEBI:29105"/>
    </cofactor>
    <text evidence="1">Binds 1 zinc ion per subunit.</text>
</comment>
<comment type="pathway">
    <text evidence="1">Purine metabolism; 7-cyano-7-deazaguanine biosynthesis.</text>
</comment>
<comment type="similarity">
    <text evidence="1">Belongs to the QueC family.</text>
</comment>
<comment type="sequence caution" evidence="2">
    <conflict type="erroneous initiation">
        <sequence resource="EMBL-CDS" id="ABP75577"/>
    </conflict>
</comment>
<accession>A4Y6J4</accession>
<gene>
    <name evidence="1" type="primary">queC</name>
    <name type="ordered locus">Sputcn32_1854</name>
</gene>
<keyword id="KW-0067">ATP-binding</keyword>
<keyword id="KW-0436">Ligase</keyword>
<keyword id="KW-0479">Metal-binding</keyword>
<keyword id="KW-0547">Nucleotide-binding</keyword>
<keyword id="KW-0671">Queuosine biosynthesis</keyword>
<keyword id="KW-0862">Zinc</keyword>
<protein>
    <recommendedName>
        <fullName evidence="1">7-cyano-7-deazaguanine synthase</fullName>
        <ecNumber evidence="1">6.3.4.20</ecNumber>
    </recommendedName>
    <alternativeName>
        <fullName evidence="1">7-cyano-7-carbaguanine synthase</fullName>
    </alternativeName>
    <alternativeName>
        <fullName evidence="1">PreQ(0) synthase</fullName>
    </alternativeName>
    <alternativeName>
        <fullName evidence="1">Queuosine biosynthesis protein QueC</fullName>
    </alternativeName>
</protein>
<sequence>MQKTFESKTATSKAVVVFSGGQDSTTCLIQALTQYDEVHGITFDYGQRHREEIEVAKSLAKRLKITSHKVMDVTLLNELAISALTRDAIPVSHELMENGLPNTFVPGRNILFLTLAGIYAYQLGAEAIITGVCETDFSGYPDCRNDFVKAMESALVQGMDKQLKIITPLMWLNKAQTWALADKYQQLDLVRHHTLTCYNGVIGDGCGDCPACHLRKRGLDDYLQNKAAVMAELDASEPKA</sequence>
<reference key="1">
    <citation type="submission" date="2007-04" db="EMBL/GenBank/DDBJ databases">
        <title>Complete sequence of Shewanella putrefaciens CN-32.</title>
        <authorList>
            <consortium name="US DOE Joint Genome Institute"/>
            <person name="Copeland A."/>
            <person name="Lucas S."/>
            <person name="Lapidus A."/>
            <person name="Barry K."/>
            <person name="Detter J.C."/>
            <person name="Glavina del Rio T."/>
            <person name="Hammon N."/>
            <person name="Israni S."/>
            <person name="Dalin E."/>
            <person name="Tice H."/>
            <person name="Pitluck S."/>
            <person name="Chain P."/>
            <person name="Malfatti S."/>
            <person name="Shin M."/>
            <person name="Vergez L."/>
            <person name="Schmutz J."/>
            <person name="Larimer F."/>
            <person name="Land M."/>
            <person name="Hauser L."/>
            <person name="Kyrpides N."/>
            <person name="Mikhailova N."/>
            <person name="Romine M.F."/>
            <person name="Fredrickson J."/>
            <person name="Tiedje J."/>
            <person name="Richardson P."/>
        </authorList>
    </citation>
    <scope>NUCLEOTIDE SEQUENCE [LARGE SCALE GENOMIC DNA]</scope>
    <source>
        <strain>CN-32 / ATCC BAA-453</strain>
    </source>
</reference>
<organism>
    <name type="scientific">Shewanella putrefaciens (strain CN-32 / ATCC BAA-453)</name>
    <dbReference type="NCBI Taxonomy" id="319224"/>
    <lineage>
        <taxon>Bacteria</taxon>
        <taxon>Pseudomonadati</taxon>
        <taxon>Pseudomonadota</taxon>
        <taxon>Gammaproteobacteria</taxon>
        <taxon>Alteromonadales</taxon>
        <taxon>Shewanellaceae</taxon>
        <taxon>Shewanella</taxon>
    </lineage>
</organism>
<feature type="chain" id="PRO_0000336946" description="7-cyano-7-deazaguanine synthase">
    <location>
        <begin position="1"/>
        <end position="240"/>
    </location>
</feature>
<feature type="binding site" evidence="1">
    <location>
        <begin position="18"/>
        <end position="28"/>
    </location>
    <ligand>
        <name>ATP</name>
        <dbReference type="ChEBI" id="CHEBI:30616"/>
    </ligand>
</feature>
<feature type="binding site" evidence="1">
    <location>
        <position position="197"/>
    </location>
    <ligand>
        <name>Zn(2+)</name>
        <dbReference type="ChEBI" id="CHEBI:29105"/>
    </ligand>
</feature>
<feature type="binding site" evidence="1">
    <location>
        <position position="206"/>
    </location>
    <ligand>
        <name>Zn(2+)</name>
        <dbReference type="ChEBI" id="CHEBI:29105"/>
    </ligand>
</feature>
<feature type="binding site" evidence="1">
    <location>
        <position position="209"/>
    </location>
    <ligand>
        <name>Zn(2+)</name>
        <dbReference type="ChEBI" id="CHEBI:29105"/>
    </ligand>
</feature>
<feature type="binding site" evidence="1">
    <location>
        <position position="212"/>
    </location>
    <ligand>
        <name>Zn(2+)</name>
        <dbReference type="ChEBI" id="CHEBI:29105"/>
    </ligand>
</feature>
<evidence type="ECO:0000255" key="1">
    <source>
        <dbReference type="HAMAP-Rule" id="MF_01633"/>
    </source>
</evidence>
<evidence type="ECO:0000305" key="2"/>
<dbReference type="EC" id="6.3.4.20" evidence="1"/>
<dbReference type="EMBL" id="CP000681">
    <property type="protein sequence ID" value="ABP75577.1"/>
    <property type="status" value="ALT_INIT"/>
    <property type="molecule type" value="Genomic_DNA"/>
</dbReference>
<dbReference type="SMR" id="A4Y6J4"/>
<dbReference type="STRING" id="319224.Sputcn32_1854"/>
<dbReference type="KEGG" id="spc:Sputcn32_1854"/>
<dbReference type="eggNOG" id="COG0603">
    <property type="taxonomic scope" value="Bacteria"/>
</dbReference>
<dbReference type="HOGENOM" id="CLU_081854_0_0_6"/>
<dbReference type="UniPathway" id="UPA00391"/>
<dbReference type="GO" id="GO:0005524">
    <property type="term" value="F:ATP binding"/>
    <property type="evidence" value="ECO:0007669"/>
    <property type="project" value="UniProtKB-UniRule"/>
</dbReference>
<dbReference type="GO" id="GO:0016879">
    <property type="term" value="F:ligase activity, forming carbon-nitrogen bonds"/>
    <property type="evidence" value="ECO:0007669"/>
    <property type="project" value="UniProtKB-UniRule"/>
</dbReference>
<dbReference type="GO" id="GO:0008270">
    <property type="term" value="F:zinc ion binding"/>
    <property type="evidence" value="ECO:0007669"/>
    <property type="project" value="UniProtKB-UniRule"/>
</dbReference>
<dbReference type="GO" id="GO:0008616">
    <property type="term" value="P:queuosine biosynthetic process"/>
    <property type="evidence" value="ECO:0007669"/>
    <property type="project" value="UniProtKB-UniRule"/>
</dbReference>
<dbReference type="CDD" id="cd01995">
    <property type="entry name" value="QueC-like"/>
    <property type="match status" value="1"/>
</dbReference>
<dbReference type="FunFam" id="3.40.50.620:FF:000017">
    <property type="entry name" value="7-cyano-7-deazaguanine synthase"/>
    <property type="match status" value="1"/>
</dbReference>
<dbReference type="Gene3D" id="3.40.50.620">
    <property type="entry name" value="HUPs"/>
    <property type="match status" value="1"/>
</dbReference>
<dbReference type="HAMAP" id="MF_01633">
    <property type="entry name" value="QueC"/>
    <property type="match status" value="1"/>
</dbReference>
<dbReference type="InterPro" id="IPR018317">
    <property type="entry name" value="QueC"/>
</dbReference>
<dbReference type="InterPro" id="IPR014729">
    <property type="entry name" value="Rossmann-like_a/b/a_fold"/>
</dbReference>
<dbReference type="NCBIfam" id="TIGR00364">
    <property type="entry name" value="7-cyano-7-deazaguanine synthase QueC"/>
    <property type="match status" value="1"/>
</dbReference>
<dbReference type="NCBIfam" id="NF008317">
    <property type="entry name" value="PRK11106.1"/>
    <property type="match status" value="1"/>
</dbReference>
<dbReference type="PANTHER" id="PTHR42914">
    <property type="entry name" value="7-CYANO-7-DEAZAGUANINE SYNTHASE"/>
    <property type="match status" value="1"/>
</dbReference>
<dbReference type="PANTHER" id="PTHR42914:SF1">
    <property type="entry name" value="7-CYANO-7-DEAZAGUANINE SYNTHASE"/>
    <property type="match status" value="1"/>
</dbReference>
<dbReference type="Pfam" id="PF06508">
    <property type="entry name" value="QueC"/>
    <property type="match status" value="1"/>
</dbReference>
<dbReference type="PIRSF" id="PIRSF006293">
    <property type="entry name" value="ExsB"/>
    <property type="match status" value="1"/>
</dbReference>
<dbReference type="SUPFAM" id="SSF52402">
    <property type="entry name" value="Adenine nucleotide alpha hydrolases-like"/>
    <property type="match status" value="1"/>
</dbReference>
<name>QUEC_SHEPC</name>